<proteinExistence type="inferred from homology"/>
<keyword id="KW-0067">ATP-binding</keyword>
<keyword id="KW-0547">Nucleotide-binding</keyword>
<comment type="function">
    <text evidence="1">Polymerizes into bundles of filaments. Polymerization requires NTP and is optimal with ATP, but GTP, UTP, CTP, and even the deoxy form of NTP can also support the polymerization reaction (By similarity).</text>
</comment>
<comment type="similarity">
    <text evidence="2">Belongs to the thermophilic archaeal actin family.</text>
</comment>
<sequence>MVVIGLDVGYGDTKVIGIDGKRIIFPSRWAVTETESWGIGGKIPVLSTDGGQTKFIYGRYASGNNIRVPQGDGRLASKEAFPLIAAALWESGIHNDGSPVDLVIGSGTPLGTFDLEVKAAKEALENKILTVTGPEGEVRQYNVTRLIMRPQGVGAALYLLNQGIIEQQPGYGVVIDVGSRTTDVLTINLMDMEPVVELSFSLQIGVGDAISNLSRKIAKETGFVVPFDLAQEALSKPVMFRQKQVGGPEVAGPILEDLANRIIENIRLNLRGEVDRITSLIPVGGGANLIGDRFDEIAPGTTVRIKPEDLQFANALGYRDAAERSM</sequence>
<feature type="chain" id="PRO_0000285696" description="Archaeal actin homolog">
    <location>
        <begin position="1"/>
        <end position="326"/>
    </location>
</feature>
<feature type="binding site" evidence="1">
    <location>
        <begin position="10"/>
        <end position="14"/>
    </location>
    <ligand>
        <name>ATP</name>
        <dbReference type="ChEBI" id="CHEBI:30616"/>
    </ligand>
</feature>
<feature type="binding site" evidence="1">
    <location>
        <position position="179"/>
    </location>
    <ligand>
        <name>ATP</name>
        <dbReference type="ChEBI" id="CHEBI:30616"/>
    </ligand>
</feature>
<feature type="binding site" evidence="1">
    <location>
        <position position="231"/>
    </location>
    <ligand>
        <name>ATP</name>
        <dbReference type="ChEBI" id="CHEBI:30616"/>
    </ligand>
</feature>
<feature type="binding site" evidence="1">
    <location>
        <begin position="285"/>
        <end position="288"/>
    </location>
    <ligand>
        <name>ATP</name>
        <dbReference type="ChEBI" id="CHEBI:30616"/>
    </ligand>
</feature>
<feature type="binding site" evidence="1">
    <location>
        <position position="311"/>
    </location>
    <ligand>
        <name>ATP</name>
        <dbReference type="ChEBI" id="CHEBI:30616"/>
    </ligand>
</feature>
<evidence type="ECO:0000250" key="1"/>
<evidence type="ECO:0000305" key="2"/>
<dbReference type="EMBL" id="BA000011">
    <property type="protein sequence ID" value="BAB59782.1"/>
    <property type="molecule type" value="Genomic_DNA"/>
</dbReference>
<dbReference type="RefSeq" id="WP_010916899.1">
    <property type="nucleotide sequence ID" value="NC_002689.2"/>
</dbReference>
<dbReference type="SMR" id="Q97B19"/>
<dbReference type="STRING" id="273116.gene:9381428"/>
<dbReference type="PaxDb" id="273116-14324856"/>
<dbReference type="GeneID" id="1441747"/>
<dbReference type="KEGG" id="tvo:TVG0633900"/>
<dbReference type="eggNOG" id="arCOG03062">
    <property type="taxonomic scope" value="Archaea"/>
</dbReference>
<dbReference type="HOGENOM" id="CLU_851534_0_0_2"/>
<dbReference type="OrthoDB" id="55553at2157"/>
<dbReference type="Proteomes" id="UP000001017">
    <property type="component" value="Chromosome"/>
</dbReference>
<dbReference type="GO" id="GO:0005524">
    <property type="term" value="F:ATP binding"/>
    <property type="evidence" value="ECO:0007669"/>
    <property type="project" value="UniProtKB-KW"/>
</dbReference>
<dbReference type="Gene3D" id="3.30.420.40">
    <property type="match status" value="2"/>
</dbReference>
<dbReference type="InterPro" id="IPR040607">
    <property type="entry name" value="ALP_N"/>
</dbReference>
<dbReference type="InterPro" id="IPR043129">
    <property type="entry name" value="ATPase_NBD"/>
</dbReference>
<dbReference type="InterPro" id="IPR049067">
    <property type="entry name" value="MreB-like_C"/>
</dbReference>
<dbReference type="Pfam" id="PF17989">
    <property type="entry name" value="ALP_N"/>
    <property type="match status" value="1"/>
</dbReference>
<dbReference type="Pfam" id="PF21522">
    <property type="entry name" value="MreB-like_C"/>
    <property type="match status" value="1"/>
</dbReference>
<dbReference type="SUPFAM" id="SSF53067">
    <property type="entry name" value="Actin-like ATPase domain"/>
    <property type="match status" value="2"/>
</dbReference>
<protein>
    <recommendedName>
        <fullName>Archaeal actin homolog</fullName>
    </recommendedName>
</protein>
<organism>
    <name type="scientific">Thermoplasma volcanium (strain ATCC 51530 / DSM 4299 / JCM 9571 / NBRC 15438 / GSS1)</name>
    <dbReference type="NCBI Taxonomy" id="273116"/>
    <lineage>
        <taxon>Archaea</taxon>
        <taxon>Methanobacteriati</taxon>
        <taxon>Thermoplasmatota</taxon>
        <taxon>Thermoplasmata</taxon>
        <taxon>Thermoplasmatales</taxon>
        <taxon>Thermoplasmataceae</taxon>
        <taxon>Thermoplasma</taxon>
    </lineage>
</organism>
<gene>
    <name type="ordered locus">TV0640</name>
    <name type="ORF">TVG0633900</name>
</gene>
<accession>Q97B19</accession>
<name>ACTH_THEVO</name>
<reference key="1">
    <citation type="journal article" date="2000" name="Proc. Natl. Acad. Sci. U.S.A.">
        <title>Archaeal adaptation to higher temperatures revealed by genomic sequence of Thermoplasma volcanium.</title>
        <authorList>
            <person name="Kawashima T."/>
            <person name="Amano N."/>
            <person name="Koike H."/>
            <person name="Makino S."/>
            <person name="Higuchi S."/>
            <person name="Kawashima-Ohya Y."/>
            <person name="Watanabe K."/>
            <person name="Yamazaki M."/>
            <person name="Kanehori K."/>
            <person name="Kawamoto T."/>
            <person name="Nunoshiba T."/>
            <person name="Yamamoto Y."/>
            <person name="Aramaki H."/>
            <person name="Makino K."/>
            <person name="Suzuki M."/>
        </authorList>
    </citation>
    <scope>NUCLEOTIDE SEQUENCE [LARGE SCALE GENOMIC DNA]</scope>
    <source>
        <strain>ATCC 51530 / DSM 4299 / JCM 9571 / NBRC 15438 / GSS1</strain>
    </source>
</reference>